<protein>
    <recommendedName>
        <fullName evidence="1">Glutamyl-tRNA reductase</fullName>
        <shortName evidence="1">GluTR</shortName>
        <ecNumber evidence="1">1.2.1.70</ecNumber>
    </recommendedName>
</protein>
<dbReference type="EC" id="1.2.1.70" evidence="1"/>
<dbReference type="EMBL" id="CP000880">
    <property type="protein sequence ID" value="ABX21081.1"/>
    <property type="molecule type" value="Genomic_DNA"/>
</dbReference>
<dbReference type="SMR" id="A9MPA0"/>
<dbReference type="STRING" id="41514.SARI_01176"/>
<dbReference type="KEGG" id="ses:SARI_01176"/>
<dbReference type="HOGENOM" id="CLU_035113_2_2_6"/>
<dbReference type="UniPathway" id="UPA00251">
    <property type="reaction ID" value="UER00316"/>
</dbReference>
<dbReference type="Proteomes" id="UP000002084">
    <property type="component" value="Chromosome"/>
</dbReference>
<dbReference type="GO" id="GO:0008883">
    <property type="term" value="F:glutamyl-tRNA reductase activity"/>
    <property type="evidence" value="ECO:0007669"/>
    <property type="project" value="UniProtKB-UniRule"/>
</dbReference>
<dbReference type="GO" id="GO:0050661">
    <property type="term" value="F:NADP binding"/>
    <property type="evidence" value="ECO:0007669"/>
    <property type="project" value="InterPro"/>
</dbReference>
<dbReference type="GO" id="GO:0019353">
    <property type="term" value="P:protoporphyrinogen IX biosynthetic process from glutamate"/>
    <property type="evidence" value="ECO:0007669"/>
    <property type="project" value="TreeGrafter"/>
</dbReference>
<dbReference type="CDD" id="cd05213">
    <property type="entry name" value="NAD_bind_Glutamyl_tRNA_reduct"/>
    <property type="match status" value="1"/>
</dbReference>
<dbReference type="FunFam" id="3.30.460.30:FF:000001">
    <property type="entry name" value="Glutamyl-tRNA reductase"/>
    <property type="match status" value="1"/>
</dbReference>
<dbReference type="FunFam" id="3.40.50.720:FF:000031">
    <property type="entry name" value="Glutamyl-tRNA reductase"/>
    <property type="match status" value="1"/>
</dbReference>
<dbReference type="Gene3D" id="3.30.460.30">
    <property type="entry name" value="Glutamyl-tRNA reductase, N-terminal domain"/>
    <property type="match status" value="1"/>
</dbReference>
<dbReference type="Gene3D" id="3.40.50.720">
    <property type="entry name" value="NAD(P)-binding Rossmann-like Domain"/>
    <property type="match status" value="1"/>
</dbReference>
<dbReference type="HAMAP" id="MF_00087">
    <property type="entry name" value="Glu_tRNA_reductase"/>
    <property type="match status" value="1"/>
</dbReference>
<dbReference type="InterPro" id="IPR000343">
    <property type="entry name" value="4pyrrol_synth_GluRdtase"/>
</dbReference>
<dbReference type="InterPro" id="IPR015896">
    <property type="entry name" value="4pyrrol_synth_GluRdtase_dimer"/>
</dbReference>
<dbReference type="InterPro" id="IPR015895">
    <property type="entry name" value="4pyrrol_synth_GluRdtase_N"/>
</dbReference>
<dbReference type="InterPro" id="IPR018214">
    <property type="entry name" value="GluRdtase_CS"/>
</dbReference>
<dbReference type="InterPro" id="IPR036453">
    <property type="entry name" value="GluRdtase_dimer_dom_sf"/>
</dbReference>
<dbReference type="InterPro" id="IPR036343">
    <property type="entry name" value="GluRdtase_N_sf"/>
</dbReference>
<dbReference type="InterPro" id="IPR036291">
    <property type="entry name" value="NAD(P)-bd_dom_sf"/>
</dbReference>
<dbReference type="InterPro" id="IPR006151">
    <property type="entry name" value="Shikm_DH/Glu-tRNA_Rdtase"/>
</dbReference>
<dbReference type="NCBIfam" id="TIGR01035">
    <property type="entry name" value="hemA"/>
    <property type="match status" value="1"/>
</dbReference>
<dbReference type="PANTHER" id="PTHR43013">
    <property type="entry name" value="GLUTAMYL-TRNA REDUCTASE"/>
    <property type="match status" value="1"/>
</dbReference>
<dbReference type="PANTHER" id="PTHR43013:SF1">
    <property type="entry name" value="GLUTAMYL-TRNA REDUCTASE"/>
    <property type="match status" value="1"/>
</dbReference>
<dbReference type="Pfam" id="PF00745">
    <property type="entry name" value="GlutR_dimer"/>
    <property type="match status" value="1"/>
</dbReference>
<dbReference type="Pfam" id="PF05201">
    <property type="entry name" value="GlutR_N"/>
    <property type="match status" value="1"/>
</dbReference>
<dbReference type="Pfam" id="PF01488">
    <property type="entry name" value="Shikimate_DH"/>
    <property type="match status" value="1"/>
</dbReference>
<dbReference type="PIRSF" id="PIRSF000445">
    <property type="entry name" value="4pyrrol_synth_GluRdtase"/>
    <property type="match status" value="1"/>
</dbReference>
<dbReference type="SUPFAM" id="SSF69742">
    <property type="entry name" value="Glutamyl tRNA-reductase catalytic, N-terminal domain"/>
    <property type="match status" value="1"/>
</dbReference>
<dbReference type="SUPFAM" id="SSF69075">
    <property type="entry name" value="Glutamyl tRNA-reductase dimerization domain"/>
    <property type="match status" value="1"/>
</dbReference>
<dbReference type="SUPFAM" id="SSF51735">
    <property type="entry name" value="NAD(P)-binding Rossmann-fold domains"/>
    <property type="match status" value="1"/>
</dbReference>
<dbReference type="PROSITE" id="PS00747">
    <property type="entry name" value="GLUTR"/>
    <property type="match status" value="1"/>
</dbReference>
<proteinExistence type="inferred from homology"/>
<organism>
    <name type="scientific">Salmonella arizonae (strain ATCC BAA-731 / CDC346-86 / RSK2980)</name>
    <dbReference type="NCBI Taxonomy" id="41514"/>
    <lineage>
        <taxon>Bacteria</taxon>
        <taxon>Pseudomonadati</taxon>
        <taxon>Pseudomonadota</taxon>
        <taxon>Gammaproteobacteria</taxon>
        <taxon>Enterobacterales</taxon>
        <taxon>Enterobacteriaceae</taxon>
        <taxon>Salmonella</taxon>
    </lineage>
</organism>
<gene>
    <name evidence="1" type="primary">hemA</name>
    <name type="ordered locus">SARI_01176</name>
</gene>
<feature type="chain" id="PRO_1000075422" description="Glutamyl-tRNA reductase">
    <location>
        <begin position="1"/>
        <end position="418"/>
    </location>
</feature>
<feature type="active site" description="Nucleophile" evidence="1">
    <location>
        <position position="50"/>
    </location>
</feature>
<feature type="binding site" evidence="1">
    <location>
        <begin position="49"/>
        <end position="52"/>
    </location>
    <ligand>
        <name>substrate</name>
    </ligand>
</feature>
<feature type="binding site" evidence="1">
    <location>
        <position position="109"/>
    </location>
    <ligand>
        <name>substrate</name>
    </ligand>
</feature>
<feature type="binding site" evidence="1">
    <location>
        <begin position="114"/>
        <end position="116"/>
    </location>
    <ligand>
        <name>substrate</name>
    </ligand>
</feature>
<feature type="binding site" evidence="1">
    <location>
        <position position="120"/>
    </location>
    <ligand>
        <name>substrate</name>
    </ligand>
</feature>
<feature type="binding site" evidence="1">
    <location>
        <begin position="189"/>
        <end position="194"/>
    </location>
    <ligand>
        <name>NADP(+)</name>
        <dbReference type="ChEBI" id="CHEBI:58349"/>
    </ligand>
</feature>
<feature type="site" description="Important for activity" evidence="1">
    <location>
        <position position="99"/>
    </location>
</feature>
<sequence length="418" mass="46105">MTLLALGINHKTAPVSLRERVTFSPDTLDQALDSLLAQPMVQGGVVLSTCNRTELYLSVEEQDNLQEALIRWLCDYHNLNEDDLRNSLYWHQDNDAVSHLMRVASGLDSLVLGEPQILGQVKKAFADSQKGHLNASALERMFQKSFSVAKRVRTETDIGASAVSVAFAACTLARQIFESLSTVTVLLVGAGETIELVARHLREHKVQKMIIANRTRERAQALADEVGAEVISLSDIDARLQDADIIISSTASPLPIIGKGMVERALKSRRNQPMLLVDIAVPRDVEPEVGKLANAYLYSVDDLQSIISHNLAQRQAAAVEAETIVEQEASEFMAWLRAQGASETIREYRSQSEQIRDELTTKALSALQQGGDAQAILQDLAWKLTNRLIHAPTKSLQQAARDGDDERLNILRDSLGLE</sequence>
<comment type="function">
    <text evidence="1">Catalyzes the NADPH-dependent reduction of glutamyl-tRNA(Glu) to glutamate 1-semialdehyde (GSA).</text>
</comment>
<comment type="catalytic activity">
    <reaction evidence="1">
        <text>(S)-4-amino-5-oxopentanoate + tRNA(Glu) + NADP(+) = L-glutamyl-tRNA(Glu) + NADPH + H(+)</text>
        <dbReference type="Rhea" id="RHEA:12344"/>
        <dbReference type="Rhea" id="RHEA-COMP:9663"/>
        <dbReference type="Rhea" id="RHEA-COMP:9680"/>
        <dbReference type="ChEBI" id="CHEBI:15378"/>
        <dbReference type="ChEBI" id="CHEBI:57501"/>
        <dbReference type="ChEBI" id="CHEBI:57783"/>
        <dbReference type="ChEBI" id="CHEBI:58349"/>
        <dbReference type="ChEBI" id="CHEBI:78442"/>
        <dbReference type="ChEBI" id="CHEBI:78520"/>
        <dbReference type="EC" id="1.2.1.70"/>
    </reaction>
</comment>
<comment type="pathway">
    <text evidence="1">Porphyrin-containing compound metabolism; protoporphyrin-IX biosynthesis; 5-aminolevulinate from L-glutamyl-tRNA(Glu): step 1/2.</text>
</comment>
<comment type="subunit">
    <text evidence="1">Homodimer.</text>
</comment>
<comment type="domain">
    <text evidence="1">Possesses an unusual extended V-shaped dimeric structure with each monomer consisting of three distinct domains arranged along a curved 'spinal' alpha-helix. The N-terminal catalytic domain specifically recognizes the glutamate moiety of the substrate. The second domain is the NADPH-binding domain, and the third C-terminal domain is responsible for dimerization.</text>
</comment>
<comment type="miscellaneous">
    <text evidence="1">During catalysis, the active site Cys acts as a nucleophile attacking the alpha-carbonyl group of tRNA-bound glutamate with the formation of a thioester intermediate between enzyme and glutamate, and the concomitant release of tRNA(Glu). The thioester intermediate is finally reduced by direct hydride transfer from NADPH, to form the product GSA.</text>
</comment>
<comment type="similarity">
    <text evidence="1">Belongs to the glutamyl-tRNA reductase family.</text>
</comment>
<keyword id="KW-0521">NADP</keyword>
<keyword id="KW-0560">Oxidoreductase</keyword>
<keyword id="KW-0627">Porphyrin biosynthesis</keyword>
<keyword id="KW-1185">Reference proteome</keyword>
<name>HEM1_SALAR</name>
<reference key="1">
    <citation type="submission" date="2007-11" db="EMBL/GenBank/DDBJ databases">
        <authorList>
            <consortium name="The Salmonella enterica serovar Arizonae Genome Sequencing Project"/>
            <person name="McClelland M."/>
            <person name="Sanderson E.K."/>
            <person name="Porwollik S."/>
            <person name="Spieth J."/>
            <person name="Clifton W.S."/>
            <person name="Fulton R."/>
            <person name="Chunyan W."/>
            <person name="Wollam A."/>
            <person name="Shah N."/>
            <person name="Pepin K."/>
            <person name="Bhonagiri V."/>
            <person name="Nash W."/>
            <person name="Johnson M."/>
            <person name="Thiruvilangam P."/>
            <person name="Wilson R."/>
        </authorList>
    </citation>
    <scope>NUCLEOTIDE SEQUENCE [LARGE SCALE GENOMIC DNA]</scope>
    <source>
        <strain>ATCC BAA-731 / CDC346-86 / RSK2980</strain>
    </source>
</reference>
<accession>A9MPA0</accession>
<evidence type="ECO:0000255" key="1">
    <source>
        <dbReference type="HAMAP-Rule" id="MF_00087"/>
    </source>
</evidence>